<geneLocation type="plasmid">
    <name>pB13</name>
</geneLocation>
<feature type="chain" id="PRO_0000105571" description="UPF0065 protein in clcB-clcD intergenic region">
    <location>
        <begin position="1" status="less than"/>
        <end position="169"/>
    </location>
</feature>
<feature type="non-terminal residue">
    <location>
        <position position="1"/>
    </location>
</feature>
<proteinExistence type="inferred from homology"/>
<protein>
    <recommendedName>
        <fullName>UPF0065 protein in clcB-clcD intergenic region</fullName>
    </recommendedName>
</protein>
<organism>
    <name type="scientific">Pseudomonas knackmussii (strain DSM 6978 / CCUG 54928 / LMG 23759 / B13)</name>
    <dbReference type="NCBI Taxonomy" id="1301098"/>
    <lineage>
        <taxon>Bacteria</taxon>
        <taxon>Pseudomonadati</taxon>
        <taxon>Pseudomonadota</taxon>
        <taxon>Gammaproteobacteria</taxon>
        <taxon>Pseudomonadales</taxon>
        <taxon>Pseudomonadaceae</taxon>
        <taxon>Pseudomonas</taxon>
    </lineage>
</organism>
<sequence>AGMGTSIHLAAALLAAQAGVDLLHVPYKGSTPAAADLIAGRLSMMVDSITAQQSFIKSGRVRALGVTSLQPAPSLPGIPPLAQAADQPNFEVLTWFGLFVPSRTSPDIVKVLNTAMNEALKTPEVQKALADIGASAQGGTSQALGVLWDNEIDRWGQLIVHHRLNTNEL</sequence>
<keyword id="KW-0574">Periplasm</keyword>
<keyword id="KW-0614">Plasmid</keyword>
<name>YCLC_PSEKB</name>
<evidence type="ECO:0000305" key="1"/>
<accession>P0A178</accession>
<accession>O30846</accession>
<accession>Q47100</accession>
<dbReference type="EMBL" id="AF019038">
    <property type="protein sequence ID" value="AAB71538.1"/>
    <property type="molecule type" value="Genomic_DNA"/>
</dbReference>
<dbReference type="SMR" id="P0A178"/>
<dbReference type="STRING" id="1301098.PKB_3275"/>
<dbReference type="eggNOG" id="COG3181">
    <property type="taxonomic scope" value="Bacteria"/>
</dbReference>
<dbReference type="GO" id="GO:0042597">
    <property type="term" value="C:periplasmic space"/>
    <property type="evidence" value="ECO:0007669"/>
    <property type="project" value="UniProtKB-SubCell"/>
</dbReference>
<dbReference type="Gene3D" id="3.40.190.10">
    <property type="entry name" value="Periplasmic binding protein-like II"/>
    <property type="match status" value="1"/>
</dbReference>
<dbReference type="InterPro" id="IPR005064">
    <property type="entry name" value="BUG"/>
</dbReference>
<dbReference type="PANTHER" id="PTHR42928:SF5">
    <property type="entry name" value="BLR1237 PROTEIN"/>
    <property type="match status" value="1"/>
</dbReference>
<dbReference type="PANTHER" id="PTHR42928">
    <property type="entry name" value="TRICARBOXYLATE-BINDING PROTEIN"/>
    <property type="match status" value="1"/>
</dbReference>
<dbReference type="Pfam" id="PF03401">
    <property type="entry name" value="TctC"/>
    <property type="match status" value="1"/>
</dbReference>
<dbReference type="SUPFAM" id="SSF53850">
    <property type="entry name" value="Periplasmic binding protein-like II"/>
    <property type="match status" value="1"/>
</dbReference>
<comment type="subcellular location">
    <subcellularLocation>
        <location evidence="1">Periplasm</location>
    </subcellularLocation>
</comment>
<comment type="similarity">
    <text evidence="1">Belongs to the UPF0065 (bug) family.</text>
</comment>
<reference key="1">
    <citation type="journal article" date="1997" name="J. Bacteriol.">
        <title>Cloning, characterization, and sequence analysis of the clcE gene encoding the maleylacetate reductase of Pseudomonas sp. strain B13.</title>
        <authorList>
            <person name="Kasberg T."/>
            <person name="Seibert V."/>
            <person name="Schlomann M."/>
            <person name="Reineke W."/>
        </authorList>
    </citation>
    <scope>NUCLEOTIDE SEQUENCE [GENOMIC DNA]</scope>
</reference>